<feature type="transit peptide" description="Mitochondrion" evidence="2">
    <location>
        <begin position="1"/>
        <end position="115"/>
    </location>
</feature>
<feature type="chain" id="PRO_0000121399" description="Protein adenylyltransferase SelO, mitochondrial">
    <location>
        <begin position="116"/>
        <end position="669"/>
    </location>
</feature>
<feature type="region of interest" description="Disordered" evidence="3">
    <location>
        <begin position="634"/>
        <end position="654"/>
    </location>
</feature>
<feature type="active site" description="Proton acceptor" evidence="1">
    <location>
        <position position="338"/>
    </location>
</feature>
<feature type="binding site" evidence="1">
    <location>
        <position position="153"/>
    </location>
    <ligand>
        <name>ATP</name>
        <dbReference type="ChEBI" id="CHEBI:30616"/>
    </ligand>
</feature>
<feature type="binding site" evidence="1">
    <location>
        <position position="155"/>
    </location>
    <ligand>
        <name>ATP</name>
        <dbReference type="ChEBI" id="CHEBI:30616"/>
    </ligand>
</feature>
<feature type="binding site" evidence="1">
    <location>
        <position position="176"/>
    </location>
    <ligand>
        <name>ATP</name>
        <dbReference type="ChEBI" id="CHEBI:30616"/>
    </ligand>
</feature>
<feature type="binding site" evidence="1">
    <location>
        <position position="188"/>
    </location>
    <ligand>
        <name>ATP</name>
        <dbReference type="ChEBI" id="CHEBI:30616"/>
    </ligand>
</feature>
<feature type="binding site" evidence="1">
    <location>
        <position position="189"/>
    </location>
    <ligand>
        <name>ATP</name>
        <dbReference type="ChEBI" id="CHEBI:30616"/>
    </ligand>
</feature>
<feature type="binding site" evidence="1">
    <location>
        <position position="246"/>
    </location>
    <ligand>
        <name>ATP</name>
        <dbReference type="ChEBI" id="CHEBI:30616"/>
    </ligand>
</feature>
<feature type="binding site" evidence="1">
    <location>
        <position position="253"/>
    </location>
    <ligand>
        <name>ATP</name>
        <dbReference type="ChEBI" id="CHEBI:30616"/>
    </ligand>
</feature>
<feature type="binding site" evidence="1">
    <location>
        <position position="339"/>
    </location>
    <ligand>
        <name>Mg(2+)</name>
        <dbReference type="ChEBI" id="CHEBI:18420"/>
    </ligand>
</feature>
<feature type="binding site" evidence="1">
    <location>
        <position position="348"/>
    </location>
    <ligand>
        <name>ATP</name>
        <dbReference type="ChEBI" id="CHEBI:30616"/>
    </ligand>
</feature>
<feature type="binding site" evidence="11">
    <location>
        <position position="348"/>
    </location>
    <ligand>
        <name>Mg(2+)</name>
        <dbReference type="ChEBI" id="CHEBI:18420"/>
    </ligand>
</feature>
<feature type="non-standard amino acid" description="Selenocysteine">
    <location>
        <position position="667"/>
    </location>
</feature>
<feature type="modified residue" description="Phosphothreonine" evidence="13">
    <location>
        <position position="635"/>
    </location>
</feature>
<feature type="modified residue" description="Phosphoserine" evidence="13">
    <location>
        <position position="653"/>
    </location>
</feature>
<feature type="sequence variant" id="VAR_059952" description="In dbSNP:rs5771225." evidence="4">
    <original>V</original>
    <variation>A</variation>
    <location>
        <position position="3"/>
    </location>
</feature>
<feature type="sequence variant" id="VAR_059953" description="In dbSNP:rs2272846." evidence="4">
    <original>T</original>
    <variation>N</variation>
    <location>
        <position position="167"/>
    </location>
</feature>
<feature type="sequence variant" id="VAR_059954" description="In dbSNP:rs2272852.">
    <original>E</original>
    <variation>K</variation>
    <location>
        <position position="630"/>
    </location>
</feature>
<feature type="sequence variant" id="VAR_059955" description="In dbSNP:rs17013238.">
    <original>E</original>
    <variation>K</variation>
    <location>
        <position position="638"/>
    </location>
</feature>
<feature type="mutagenesis site" description="Loss of catalytic activity. Loss of ATP binding." evidence="6">
    <original>D</original>
    <variation>A</variation>
    <location>
        <position position="348"/>
    </location>
</feature>
<feature type="mutagenesis site" description="Enhances redox complex formation." evidence="5">
    <original>CVTU</original>
    <variation>SVTC</variation>
    <location>
        <begin position="664"/>
        <end position="667"/>
    </location>
</feature>
<feature type="mutagenesis site" description="Abolishes redox complex formation." evidence="5">
    <original>CVTU</original>
    <variation>SVTS</variation>
    <location>
        <begin position="664"/>
        <end position="667"/>
    </location>
</feature>
<feature type="mutagenesis site" description="No effect on redox complex formation." evidence="5">
    <original>C</original>
    <variation>S</variation>
    <location>
        <position position="664"/>
    </location>
</feature>
<feature type="mutagenesis site" description="Slightly enhances redox complex formation." evidence="5">
    <original>U</original>
    <variation>C</variation>
    <location>
        <position position="667"/>
    </location>
</feature>
<feature type="mutagenesis site" description="No effect on redox complex formation." evidence="5">
    <original>U</original>
    <variation>S</variation>
    <location>
        <position position="667"/>
    </location>
</feature>
<feature type="sequence conflict" description="In Ref. 3; AAH20510." evidence="10" ref="3">
    <original>R</original>
    <variation>RGWGQVWPVDASGLPSR</variation>
    <location>
        <position position="253"/>
    </location>
</feature>
<organism>
    <name type="scientific">Homo sapiens</name>
    <name type="common">Human</name>
    <dbReference type="NCBI Taxonomy" id="9606"/>
    <lineage>
        <taxon>Eukaryota</taxon>
        <taxon>Metazoa</taxon>
        <taxon>Chordata</taxon>
        <taxon>Craniata</taxon>
        <taxon>Vertebrata</taxon>
        <taxon>Euteleostomi</taxon>
        <taxon>Mammalia</taxon>
        <taxon>Eutheria</taxon>
        <taxon>Euarchontoglires</taxon>
        <taxon>Primates</taxon>
        <taxon>Haplorrhini</taxon>
        <taxon>Catarrhini</taxon>
        <taxon>Hominidae</taxon>
        <taxon>Homo</taxon>
    </lineage>
</organism>
<reference key="1">
    <citation type="journal article" date="2003" name="Science">
        <title>Characterization of mammalian selenoproteomes.</title>
        <authorList>
            <person name="Kryukov G.V."/>
            <person name="Castellano S."/>
            <person name="Novoselov S.V."/>
            <person name="Lobanov A.V."/>
            <person name="Zehtab O."/>
            <person name="Guigo R."/>
            <person name="Gladyshev V.N."/>
        </authorList>
    </citation>
    <scope>NUCLEOTIDE SEQUENCE [MRNA]</scope>
</reference>
<reference key="2">
    <citation type="journal article" date="1999" name="Nature">
        <title>The DNA sequence of human chromosome 22.</title>
        <authorList>
            <person name="Dunham I."/>
            <person name="Hunt A.R."/>
            <person name="Collins J.E."/>
            <person name="Bruskiewich R."/>
            <person name="Beare D.M."/>
            <person name="Clamp M."/>
            <person name="Smink L.J."/>
            <person name="Ainscough R."/>
            <person name="Almeida J.P."/>
            <person name="Babbage A.K."/>
            <person name="Bagguley C."/>
            <person name="Bailey J."/>
            <person name="Barlow K.F."/>
            <person name="Bates K.N."/>
            <person name="Beasley O.P."/>
            <person name="Bird C.P."/>
            <person name="Blakey S.E."/>
            <person name="Bridgeman A.M."/>
            <person name="Buck D."/>
            <person name="Burgess J."/>
            <person name="Burrill W.D."/>
            <person name="Burton J."/>
            <person name="Carder C."/>
            <person name="Carter N.P."/>
            <person name="Chen Y."/>
            <person name="Clark G."/>
            <person name="Clegg S.M."/>
            <person name="Cobley V.E."/>
            <person name="Cole C.G."/>
            <person name="Collier R.E."/>
            <person name="Connor R."/>
            <person name="Conroy D."/>
            <person name="Corby N.R."/>
            <person name="Coville G.J."/>
            <person name="Cox A.V."/>
            <person name="Davis J."/>
            <person name="Dawson E."/>
            <person name="Dhami P.D."/>
            <person name="Dockree C."/>
            <person name="Dodsworth S.J."/>
            <person name="Durbin R.M."/>
            <person name="Ellington A.G."/>
            <person name="Evans K.L."/>
            <person name="Fey J.M."/>
            <person name="Fleming K."/>
            <person name="French L."/>
            <person name="Garner A.A."/>
            <person name="Gilbert J.G.R."/>
            <person name="Goward M.E."/>
            <person name="Grafham D.V."/>
            <person name="Griffiths M.N.D."/>
            <person name="Hall C."/>
            <person name="Hall R.E."/>
            <person name="Hall-Tamlyn G."/>
            <person name="Heathcott R.W."/>
            <person name="Ho S."/>
            <person name="Holmes S."/>
            <person name="Hunt S.E."/>
            <person name="Jones M.C."/>
            <person name="Kershaw J."/>
            <person name="Kimberley A.M."/>
            <person name="King A."/>
            <person name="Laird G.K."/>
            <person name="Langford C.F."/>
            <person name="Leversha M.A."/>
            <person name="Lloyd C."/>
            <person name="Lloyd D.M."/>
            <person name="Martyn I.D."/>
            <person name="Mashreghi-Mohammadi M."/>
            <person name="Matthews L.H."/>
            <person name="Mccann O.T."/>
            <person name="Mcclay J."/>
            <person name="Mclaren S."/>
            <person name="McMurray A.A."/>
            <person name="Milne S.A."/>
            <person name="Mortimore B.J."/>
            <person name="Odell C.N."/>
            <person name="Pavitt R."/>
            <person name="Pearce A.V."/>
            <person name="Pearson D."/>
            <person name="Phillimore B.J.C.T."/>
            <person name="Phillips S.H."/>
            <person name="Plumb R.W."/>
            <person name="Ramsay H."/>
            <person name="Ramsey Y."/>
            <person name="Rogers L."/>
            <person name="Ross M.T."/>
            <person name="Scott C.E."/>
            <person name="Sehra H.K."/>
            <person name="Skuce C.D."/>
            <person name="Smalley S."/>
            <person name="Smith M.L."/>
            <person name="Soderlund C."/>
            <person name="Spragon L."/>
            <person name="Steward C.A."/>
            <person name="Sulston J.E."/>
            <person name="Swann R.M."/>
            <person name="Vaudin M."/>
            <person name="Wall M."/>
            <person name="Wallis J.M."/>
            <person name="Whiteley M.N."/>
            <person name="Willey D.L."/>
            <person name="Williams L."/>
            <person name="Williams S.A."/>
            <person name="Williamson H."/>
            <person name="Wilmer T.E."/>
            <person name="Wilming L."/>
            <person name="Wright C.L."/>
            <person name="Hubbard T."/>
            <person name="Bentley D.R."/>
            <person name="Beck S."/>
            <person name="Rogers J."/>
            <person name="Shimizu N."/>
            <person name="Minoshima S."/>
            <person name="Kawasaki K."/>
            <person name="Sasaki T."/>
            <person name="Asakawa S."/>
            <person name="Kudoh J."/>
            <person name="Shintani A."/>
            <person name="Shibuya K."/>
            <person name="Yoshizaki Y."/>
            <person name="Aoki N."/>
            <person name="Mitsuyama S."/>
            <person name="Roe B.A."/>
            <person name="Chen F."/>
            <person name="Chu L."/>
            <person name="Crabtree J."/>
            <person name="Deschamps S."/>
            <person name="Do A."/>
            <person name="Do T."/>
            <person name="Dorman A."/>
            <person name="Fang F."/>
            <person name="Fu Y."/>
            <person name="Hu P."/>
            <person name="Hua A."/>
            <person name="Kenton S."/>
            <person name="Lai H."/>
            <person name="Lao H.I."/>
            <person name="Lewis J."/>
            <person name="Lewis S."/>
            <person name="Lin S.-P."/>
            <person name="Loh P."/>
            <person name="Malaj E."/>
            <person name="Nguyen T."/>
            <person name="Pan H."/>
            <person name="Phan S."/>
            <person name="Qi S."/>
            <person name="Qian Y."/>
            <person name="Ray L."/>
            <person name="Ren Q."/>
            <person name="Shaull S."/>
            <person name="Sloan D."/>
            <person name="Song L."/>
            <person name="Wang Q."/>
            <person name="Wang Y."/>
            <person name="Wang Z."/>
            <person name="White J."/>
            <person name="Willingham D."/>
            <person name="Wu H."/>
            <person name="Yao Z."/>
            <person name="Zhan M."/>
            <person name="Zhang G."/>
            <person name="Chissoe S."/>
            <person name="Murray J."/>
            <person name="Miller N."/>
            <person name="Minx P."/>
            <person name="Fulton R."/>
            <person name="Johnson D."/>
            <person name="Bemis G."/>
            <person name="Bentley D."/>
            <person name="Bradshaw H."/>
            <person name="Bourne S."/>
            <person name="Cordes M."/>
            <person name="Du Z."/>
            <person name="Fulton L."/>
            <person name="Goela D."/>
            <person name="Graves T."/>
            <person name="Hawkins J."/>
            <person name="Hinds K."/>
            <person name="Kemp K."/>
            <person name="Latreille P."/>
            <person name="Layman D."/>
            <person name="Ozersky P."/>
            <person name="Rohlfing T."/>
            <person name="Scheet P."/>
            <person name="Walker C."/>
            <person name="Wamsley A."/>
            <person name="Wohldmann P."/>
            <person name="Pepin K."/>
            <person name="Nelson J."/>
            <person name="Korf I."/>
            <person name="Bedell J.A."/>
            <person name="Hillier L.W."/>
            <person name="Mardis E."/>
            <person name="Waterston R."/>
            <person name="Wilson R."/>
            <person name="Emanuel B.S."/>
            <person name="Shaikh T."/>
            <person name="Kurahashi H."/>
            <person name="Saitta S."/>
            <person name="Budarf M.L."/>
            <person name="McDermid H.E."/>
            <person name="Johnson A."/>
            <person name="Wong A.C.C."/>
            <person name="Morrow B.E."/>
            <person name="Edelmann L."/>
            <person name="Kim U.J."/>
            <person name="Shizuya H."/>
            <person name="Simon M.I."/>
            <person name="Dumanski J.P."/>
            <person name="Peyrard M."/>
            <person name="Kedra D."/>
            <person name="Seroussi E."/>
            <person name="Fransson I."/>
            <person name="Tapia I."/>
            <person name="Bruder C.E."/>
            <person name="O'Brien K.P."/>
            <person name="Wilkinson P."/>
            <person name="Bodenteich A."/>
            <person name="Hartman K."/>
            <person name="Hu X."/>
            <person name="Khan A.S."/>
            <person name="Lane L."/>
            <person name="Tilahun Y."/>
            <person name="Wright H."/>
        </authorList>
    </citation>
    <scope>NUCLEOTIDE SEQUENCE [LARGE SCALE GENOMIC DNA]</scope>
</reference>
<reference key="3">
    <citation type="journal article" date="2004" name="Genome Res.">
        <title>The status, quality, and expansion of the NIH full-length cDNA project: the Mammalian Gene Collection (MGC).</title>
        <authorList>
            <consortium name="The MGC Project Team"/>
        </authorList>
    </citation>
    <scope>NUCLEOTIDE SEQUENCE [LARGE SCALE MRNA]</scope>
    <scope>VARIANTS ALA-3 AND ASN-167</scope>
    <source>
        <tissue>Brain</tissue>
        <tissue>Colon</tissue>
        <tissue>Testis</tissue>
    </source>
</reference>
<reference key="4">
    <citation type="journal article" date="2014" name="J. Proteomics">
        <title>An enzyme assisted RP-RPLC approach for in-depth analysis of human liver phosphoproteome.</title>
        <authorList>
            <person name="Bian Y."/>
            <person name="Song C."/>
            <person name="Cheng K."/>
            <person name="Dong M."/>
            <person name="Wang F."/>
            <person name="Huang J."/>
            <person name="Sun D."/>
            <person name="Wang L."/>
            <person name="Ye M."/>
            <person name="Zou H."/>
        </authorList>
    </citation>
    <scope>PHOSPHORYLATION [LARGE SCALE ANALYSIS] AT THR-635 AND SER-653</scope>
    <scope>IDENTIFICATION BY MASS SPECTROMETRY [LARGE SCALE ANALYSIS]</scope>
    <source>
        <tissue>Liver</tissue>
    </source>
</reference>
<reference key="5">
    <citation type="journal article" date="2014" name="PLoS ONE">
        <title>Characterization of mammalian selenoprotein o: a redox-active mitochondrial protein.</title>
        <authorList>
            <person name="Han S.J."/>
            <person name="Lee B.C."/>
            <person name="Yim S.H."/>
            <person name="Gladyshev V.N."/>
            <person name="Lee S.R."/>
        </authorList>
    </citation>
    <scope>FUNCTION</scope>
    <scope>SUBCELLULAR LOCATION</scope>
    <scope>TISSUE SPECIFICITY</scope>
    <scope>MUTAGENESIS OF 664-CYS--SEC-667; CYS-664 AND SEC-667</scope>
</reference>
<reference key="6">
    <citation type="journal article" date="2016" name="J. Biol. Chem.">
        <title>Selenoprotein gene nomenclature.</title>
        <authorList>
            <person name="Gladyshev V.N."/>
            <person name="Arner E.S."/>
            <person name="Berry M.J."/>
            <person name="Brigelius-Flohe R."/>
            <person name="Bruford E.A."/>
            <person name="Burk R.F."/>
            <person name="Carlson B.A."/>
            <person name="Castellano S."/>
            <person name="Chavatte L."/>
            <person name="Conrad M."/>
            <person name="Copeland P.R."/>
            <person name="Diamond A.M."/>
            <person name="Driscoll D.M."/>
            <person name="Ferreiro A."/>
            <person name="Flohe L."/>
            <person name="Green F.R."/>
            <person name="Guigo R."/>
            <person name="Handy D.E."/>
            <person name="Hatfield D.L."/>
            <person name="Hesketh J."/>
            <person name="Hoffmann P.R."/>
            <person name="Holmgren A."/>
            <person name="Hondal R.J."/>
            <person name="Howard M.T."/>
            <person name="Huang K."/>
            <person name="Kim H.Y."/>
            <person name="Kim I.Y."/>
            <person name="Koehrle J."/>
            <person name="Krol A."/>
            <person name="Kryukov G.V."/>
            <person name="Lee B.J."/>
            <person name="Lee B.C."/>
            <person name="Lei X.G."/>
            <person name="Liu Q."/>
            <person name="Lescure A."/>
            <person name="Lobanov A.V."/>
            <person name="Loscalzo J."/>
            <person name="Maiorino M."/>
            <person name="Mariotti M."/>
            <person name="Sandeep Prabhu K."/>
            <person name="Rayman M.P."/>
            <person name="Rozovsky S."/>
            <person name="Salinas G."/>
            <person name="Schmidt E.E."/>
            <person name="Schomburg L."/>
            <person name="Schweizer U."/>
            <person name="Simonovic M."/>
            <person name="Sunde R.A."/>
            <person name="Tsuji P.A."/>
            <person name="Tweedie S."/>
            <person name="Ursini F."/>
            <person name="Whanger P.D."/>
            <person name="Zhang Y."/>
        </authorList>
    </citation>
    <scope>NOMENCLATURE</scope>
</reference>
<reference key="7">
    <citation type="journal article" date="2018" name="Cell">
        <title>Protein AMPylation by an Evolutionarily Conserved Pseudokinase.</title>
        <authorList>
            <person name="Sreelatha A."/>
            <person name="Yee S.S."/>
            <person name="Lopez V.A."/>
            <person name="Park B.C."/>
            <person name="Kinch L.N."/>
            <person name="Pilch S."/>
            <person name="Servage K.A."/>
            <person name="Zhang J."/>
            <person name="Jiou J."/>
            <person name="Karasiewicz-Urbanska M."/>
            <person name="Lobocka M."/>
            <person name="Grishin N.V."/>
            <person name="Orth K."/>
            <person name="Kucharczyk R."/>
            <person name="Pawlowski K."/>
            <person name="Tomchick D.R."/>
            <person name="Tagliabracci V.S."/>
        </authorList>
    </citation>
    <scope>FUNCTION</scope>
    <scope>CATALYTIC ACTIVITY</scope>
    <scope>MUTAGENESIS OF ASP-348</scope>
</reference>
<comment type="function">
    <text evidence="5 6">Catalyzes the transfer of adenosine 5'-monophosphate (AMP) to Ser, Thr and Tyr residues of target proteins (AMPylation) (PubMed:30270044). May be a redox-active mitochondrial selenoprotein which interacts with a redox target protein (PubMed:24751718).</text>
</comment>
<comment type="catalytic activity">
    <reaction evidence="6">
        <text>L-tyrosyl-[protein] + ATP = O-(5'-adenylyl)-L-tyrosyl-[protein] + diphosphate</text>
        <dbReference type="Rhea" id="RHEA:54288"/>
        <dbReference type="Rhea" id="RHEA-COMP:10136"/>
        <dbReference type="Rhea" id="RHEA-COMP:13846"/>
        <dbReference type="ChEBI" id="CHEBI:30616"/>
        <dbReference type="ChEBI" id="CHEBI:33019"/>
        <dbReference type="ChEBI" id="CHEBI:46858"/>
        <dbReference type="ChEBI" id="CHEBI:83624"/>
        <dbReference type="EC" id="2.7.7.108"/>
    </reaction>
    <physiologicalReaction direction="left-to-right" evidence="6">
        <dbReference type="Rhea" id="RHEA:54289"/>
    </physiologicalReaction>
</comment>
<comment type="catalytic activity">
    <reaction evidence="6">
        <text>L-threonyl-[protein] + ATP = 3-O-(5'-adenylyl)-L-threonyl-[protein] + diphosphate</text>
        <dbReference type="Rhea" id="RHEA:54292"/>
        <dbReference type="Rhea" id="RHEA-COMP:11060"/>
        <dbReference type="Rhea" id="RHEA-COMP:13847"/>
        <dbReference type="ChEBI" id="CHEBI:30013"/>
        <dbReference type="ChEBI" id="CHEBI:30616"/>
        <dbReference type="ChEBI" id="CHEBI:33019"/>
        <dbReference type="ChEBI" id="CHEBI:138113"/>
        <dbReference type="EC" id="2.7.7.108"/>
    </reaction>
    <physiologicalReaction direction="left-to-right" evidence="6">
        <dbReference type="Rhea" id="RHEA:54293"/>
    </physiologicalReaction>
</comment>
<comment type="catalytic activity">
    <reaction evidence="6">
        <text>L-seryl-[protein] + ATP = 3-O-(5'-adenylyl)-L-seryl-[protein] + diphosphate</text>
        <dbReference type="Rhea" id="RHEA:58120"/>
        <dbReference type="Rhea" id="RHEA-COMP:9863"/>
        <dbReference type="Rhea" id="RHEA-COMP:15073"/>
        <dbReference type="ChEBI" id="CHEBI:29999"/>
        <dbReference type="ChEBI" id="CHEBI:30616"/>
        <dbReference type="ChEBI" id="CHEBI:33019"/>
        <dbReference type="ChEBI" id="CHEBI:142516"/>
    </reaction>
    <physiologicalReaction direction="left-to-right" evidence="6">
        <dbReference type="Rhea" id="RHEA:58121"/>
    </physiologicalReaction>
</comment>
<comment type="cofactor">
    <cofactor evidence="1">
        <name>Mg(2+)</name>
        <dbReference type="ChEBI" id="CHEBI:18420"/>
    </cofactor>
</comment>
<comment type="subcellular location">
    <subcellularLocation>
        <location evidence="5">Mitochondrion</location>
    </subcellularLocation>
</comment>
<comment type="similarity">
    <text evidence="10">Belongs to the SELO family.</text>
</comment>
<comment type="sequence caution" evidence="10">
    <conflict type="erroneous termination">
        <sequence resource="EMBL-CDS" id="AAH01099"/>
    </conflict>
    <text>Truncated C-terminus.</text>
</comment>
<comment type="sequence caution" evidence="10">
    <conflict type="erroneous termination">
        <sequence resource="EMBL-CDS" id="AAH20510"/>
    </conflict>
    <text>Truncated C-terminus.</text>
</comment>
<gene>
    <name evidence="12" type="primary">SELENOO</name>
    <name evidence="7 8 9" type="synonym">SELO</name>
</gene>
<sequence length="669" mass="73489">MAVYRAALGASLAAARLLPLGRCSPSPAPRSTLSGAAMEPAPRWLAGLRFDNRALRALPVEAPPPGPEGAPSAPRPVPGACFTRVQPTPLRQPRLVALSEPALALLGLGAPPAREAEAEAALFFSGNALLPGAEPAAHCYCGHQFGQFAGQLGDGAAMYLGEVCTATGERWELQLKGAGPTPFSRQADGRKVLRSSIREFLCSEAMFHLGVPTTRAGACVTSESTVVRDVFYDGNPKYEQCTVVLRVASTFIRFGSFEIFKSADEHTGRAGPSVGRNDIRVQLLDYVISSFYPEIQAAHASDSVQRNAAFFREVTRRTARMVAEWQCVGFCHGVLNTDNMSILGLTIDYGPFGFLDRYDPDHVCNASDNTGRYAYSKQPEVCRWNLRKLAEALQPELPLELGEAILAEEFDAEFQRHYLQKMRRKLGLVQVELEEDGALVSKLLETMHLTGADFTNTFYLLSSFPVELESPGLAEFLARLMEQCASLEELRLAFRPQMDPRQLSMMLMLAQSNPQLFALMGTRAGIARELERVEQQSRLEQLSAAELQSRNQGHWADWLQAYRARLDKDLEGAGDAAAWQAEHVRVMHANNPKYVLRNYIAQNAIEAAERGDFSEVRRVLKLLETPYHCEAGAATDAEATEADGADGRQRSYSSKPPLWAAELCVTUSS</sequence>
<protein>
    <recommendedName>
        <fullName evidence="10">Protein adenylyltransferase SelO, mitochondrial</fullName>
        <ecNumber evidence="6">2.7.7.-</ecNumber>
        <ecNumber evidence="6">2.7.7.108</ecNumber>
    </recommendedName>
    <alternativeName>
        <fullName evidence="9">Selenoprotein O</fullName>
        <shortName evidence="7 8 9">SelO</shortName>
    </alternativeName>
</protein>
<proteinExistence type="evidence at protein level"/>
<dbReference type="EC" id="2.7.7.-" evidence="6"/>
<dbReference type="EC" id="2.7.7.108" evidence="6"/>
<dbReference type="EMBL" id="AY324823">
    <property type="protein sequence ID" value="AAP85540.1"/>
    <property type="molecule type" value="mRNA"/>
</dbReference>
<dbReference type="EMBL" id="AL022328">
    <property type="status" value="NOT_ANNOTATED_CDS"/>
    <property type="molecule type" value="Genomic_DNA"/>
</dbReference>
<dbReference type="EMBL" id="BC001099">
    <property type="protein sequence ID" value="AAH01099.3"/>
    <property type="status" value="ALT_SEQ"/>
    <property type="molecule type" value="mRNA"/>
</dbReference>
<dbReference type="EMBL" id="BC020510">
    <property type="protein sequence ID" value="AAH20510.1"/>
    <property type="status" value="ALT_SEQ"/>
    <property type="molecule type" value="mRNA"/>
</dbReference>
<dbReference type="EMBL" id="BC110866">
    <property type="protein sequence ID" value="AAI10867.1"/>
    <property type="molecule type" value="mRNA"/>
</dbReference>
<dbReference type="CCDS" id="CCDS43034.1"/>
<dbReference type="RefSeq" id="NP_113642.1">
    <property type="nucleotide sequence ID" value="NM_031454.2"/>
</dbReference>
<dbReference type="BioGRID" id="123706">
    <property type="interactions" value="42"/>
</dbReference>
<dbReference type="FunCoup" id="Q9BVL4">
    <property type="interactions" value="820"/>
</dbReference>
<dbReference type="IntAct" id="Q9BVL4">
    <property type="interactions" value="36"/>
</dbReference>
<dbReference type="MINT" id="Q9BVL4"/>
<dbReference type="STRING" id="9606.ENSP00000370288"/>
<dbReference type="GlyGen" id="Q9BVL4">
    <property type="glycosylation" value="2 sites, 1 O-linked glycan (1 site)"/>
</dbReference>
<dbReference type="iPTMnet" id="Q9BVL4"/>
<dbReference type="PhosphoSitePlus" id="Q9BVL4"/>
<dbReference type="SwissPalm" id="Q9BVL4"/>
<dbReference type="BioMuta" id="SELENOO"/>
<dbReference type="DMDM" id="172045770"/>
<dbReference type="jPOST" id="Q9BVL4"/>
<dbReference type="MassIVE" id="Q9BVL4"/>
<dbReference type="PaxDb" id="9606-ENSP00000370288"/>
<dbReference type="PeptideAtlas" id="Q9BVL4"/>
<dbReference type="ProteomicsDB" id="79218"/>
<dbReference type="Pumba" id="Q9BVL4"/>
<dbReference type="Antibodypedia" id="76483">
    <property type="antibodies" value="7 antibodies from 5 providers"/>
</dbReference>
<dbReference type="DNASU" id="83642"/>
<dbReference type="Ensembl" id="ENST00000380903.7">
    <property type="protein sequence ID" value="ENSP00000370288.2"/>
    <property type="gene ID" value="ENSG00000073169.15"/>
</dbReference>
<dbReference type="GeneID" id="83642"/>
<dbReference type="KEGG" id="hsa:83642"/>
<dbReference type="MANE-Select" id="ENST00000380903.7">
    <property type="protein sequence ID" value="ENSP00000370288.2"/>
    <property type="RefSeq nucleotide sequence ID" value="NM_031454.2"/>
    <property type="RefSeq protein sequence ID" value="NP_113642.1"/>
</dbReference>
<dbReference type="AGR" id="HGNC:30395"/>
<dbReference type="CTD" id="83642"/>
<dbReference type="DisGeNET" id="83642"/>
<dbReference type="GeneCards" id="SELENOO"/>
<dbReference type="HGNC" id="HGNC:30395">
    <property type="gene designation" value="SELENOO"/>
</dbReference>
<dbReference type="HPA" id="ENSG00000073169">
    <property type="expression patterns" value="Tissue enhanced (liver)"/>
</dbReference>
<dbReference type="MIM" id="607917">
    <property type="type" value="gene"/>
</dbReference>
<dbReference type="neXtProt" id="NX_Q9BVL4"/>
<dbReference type="OpenTargets" id="ENSG00000073169"/>
<dbReference type="VEuPathDB" id="HostDB:ENSG00000073169"/>
<dbReference type="eggNOG" id="KOG2542">
    <property type="taxonomic scope" value="Eukaryota"/>
</dbReference>
<dbReference type="GeneTree" id="ENSGT00390000005508"/>
<dbReference type="InParanoid" id="Q9BVL4"/>
<dbReference type="OMA" id="LCVTXSS"/>
<dbReference type="OrthoDB" id="10254721at2759"/>
<dbReference type="PAN-GO" id="Q9BVL4">
    <property type="GO annotations" value="0 GO annotations based on evolutionary models"/>
</dbReference>
<dbReference type="PhylomeDB" id="Q9BVL4"/>
<dbReference type="BioCyc" id="MetaCyc:ENSG00000073169-MONOMER"/>
<dbReference type="PathwayCommons" id="Q9BVL4"/>
<dbReference type="SignaLink" id="Q9BVL4"/>
<dbReference type="BioGRID-ORCS" id="83642">
    <property type="hits" value="8 hits in 1107 CRISPR screens"/>
</dbReference>
<dbReference type="ChiTaRS" id="SELENOO">
    <property type="organism name" value="human"/>
</dbReference>
<dbReference type="GenomeRNAi" id="83642"/>
<dbReference type="Pharos" id="Q9BVL4">
    <property type="development level" value="Tdark"/>
</dbReference>
<dbReference type="PRO" id="PR:Q9BVL4"/>
<dbReference type="Proteomes" id="UP000005640">
    <property type="component" value="Chromosome 22"/>
</dbReference>
<dbReference type="RNAct" id="Q9BVL4">
    <property type="molecule type" value="protein"/>
</dbReference>
<dbReference type="Bgee" id="ENSG00000073169">
    <property type="expression patterns" value="Expressed in pancreatic ductal cell and 185 other cell types or tissues"/>
</dbReference>
<dbReference type="ExpressionAtlas" id="Q9BVL4">
    <property type="expression patterns" value="baseline and differential"/>
</dbReference>
<dbReference type="GO" id="GO:0005694">
    <property type="term" value="C:chromosome"/>
    <property type="evidence" value="ECO:0000314"/>
    <property type="project" value="HPA"/>
</dbReference>
<dbReference type="GO" id="GO:0005739">
    <property type="term" value="C:mitochondrion"/>
    <property type="evidence" value="ECO:0000314"/>
    <property type="project" value="UniProtKB"/>
</dbReference>
<dbReference type="GO" id="GO:0070733">
    <property type="term" value="F:AMPylase activity"/>
    <property type="evidence" value="ECO:0000314"/>
    <property type="project" value="UniProtKB"/>
</dbReference>
<dbReference type="GO" id="GO:0005524">
    <property type="term" value="F:ATP binding"/>
    <property type="evidence" value="ECO:0007669"/>
    <property type="project" value="UniProtKB-KW"/>
</dbReference>
<dbReference type="GO" id="GO:0046872">
    <property type="term" value="F:metal ion binding"/>
    <property type="evidence" value="ECO:0007669"/>
    <property type="project" value="UniProtKB-KW"/>
</dbReference>
<dbReference type="GO" id="GO:0018117">
    <property type="term" value="P:protein adenylylation"/>
    <property type="evidence" value="ECO:0000314"/>
    <property type="project" value="UniProtKB"/>
</dbReference>
<dbReference type="HAMAP" id="MF_00692">
    <property type="entry name" value="YdiU_SelO"/>
    <property type="match status" value="1"/>
</dbReference>
<dbReference type="InterPro" id="IPR003846">
    <property type="entry name" value="SelO"/>
</dbReference>
<dbReference type="NCBIfam" id="NF000658">
    <property type="entry name" value="PRK00029.1"/>
    <property type="match status" value="1"/>
</dbReference>
<dbReference type="PANTHER" id="PTHR12153:SF15">
    <property type="entry name" value="PROTEIN ADENYLYLTRANSFERASE SELO, MITOCHONDRIAL"/>
    <property type="match status" value="1"/>
</dbReference>
<dbReference type="PANTHER" id="PTHR12153">
    <property type="entry name" value="SELENOPROTEIN O"/>
    <property type="match status" value="1"/>
</dbReference>
<dbReference type="Pfam" id="PF02696">
    <property type="entry name" value="SelO"/>
    <property type="match status" value="1"/>
</dbReference>
<evidence type="ECO:0000250" key="1">
    <source>
        <dbReference type="UniProtKB" id="Q87VB1"/>
    </source>
</evidence>
<evidence type="ECO:0000255" key="2"/>
<evidence type="ECO:0000256" key="3">
    <source>
        <dbReference type="SAM" id="MobiDB-lite"/>
    </source>
</evidence>
<evidence type="ECO:0000269" key="4">
    <source>
    </source>
</evidence>
<evidence type="ECO:0000269" key="5">
    <source>
    </source>
</evidence>
<evidence type="ECO:0000269" key="6">
    <source>
    </source>
</evidence>
<evidence type="ECO:0000303" key="7">
    <source>
    </source>
</evidence>
<evidence type="ECO:0000303" key="8">
    <source>
    </source>
</evidence>
<evidence type="ECO:0000303" key="9">
    <source>
    </source>
</evidence>
<evidence type="ECO:0000305" key="10"/>
<evidence type="ECO:0000305" key="11">
    <source>
    </source>
</evidence>
<evidence type="ECO:0000312" key="12">
    <source>
        <dbReference type="HGNC" id="HGNC:30395"/>
    </source>
</evidence>
<evidence type="ECO:0007744" key="13">
    <source>
    </source>
</evidence>
<keyword id="KW-0067">ATP-binding</keyword>
<keyword id="KW-0460">Magnesium</keyword>
<keyword id="KW-0479">Metal-binding</keyword>
<keyword id="KW-0496">Mitochondrion</keyword>
<keyword id="KW-0547">Nucleotide-binding</keyword>
<keyword id="KW-0548">Nucleotidyltransferase</keyword>
<keyword id="KW-0597">Phosphoprotein</keyword>
<keyword id="KW-1267">Proteomics identification</keyword>
<keyword id="KW-1185">Reference proteome</keyword>
<keyword id="KW-0712">Selenocysteine</keyword>
<keyword id="KW-0808">Transferase</keyword>
<keyword id="KW-0809">Transit peptide</keyword>
<accession>Q9BVL4</accession>
<accession>Q2TAL2</accession>
<accession>Q5JZ81</accession>
<accession>Q8WUI0</accession>
<name>SELO_HUMAN</name>